<sequence>MAEITREQVVDYLSNLPVIQIAELIKDLENKWGVKAAPAAVAVAAGPAAAAPAEKAPEQTEFDVVLANAGSNKIGVIKAIREITGLGLKEAKDLVEAAPKTVKEQVSKADAEEMKKKLVEAGATVELK</sequence>
<protein>
    <recommendedName>
        <fullName evidence="1">Large ribosomal subunit protein bL12</fullName>
    </recommendedName>
    <alternativeName>
        <fullName evidence="2">50S ribosomal protein L7/L12</fullName>
    </alternativeName>
</protein>
<dbReference type="EMBL" id="AM746676">
    <property type="protein sequence ID" value="CAN90566.1"/>
    <property type="molecule type" value="Genomic_DNA"/>
</dbReference>
<dbReference type="RefSeq" id="WP_012233044.1">
    <property type="nucleotide sequence ID" value="NC_010162.1"/>
</dbReference>
<dbReference type="SMR" id="A9GRA8"/>
<dbReference type="STRING" id="448385.sce0409"/>
<dbReference type="KEGG" id="scl:sce0409"/>
<dbReference type="eggNOG" id="COG0222">
    <property type="taxonomic scope" value="Bacteria"/>
</dbReference>
<dbReference type="HOGENOM" id="CLU_086499_3_2_7"/>
<dbReference type="OrthoDB" id="9811748at2"/>
<dbReference type="BioCyc" id="SCEL448385:SCE_RS02155-MONOMER"/>
<dbReference type="Proteomes" id="UP000002139">
    <property type="component" value="Chromosome"/>
</dbReference>
<dbReference type="GO" id="GO:0005737">
    <property type="term" value="C:cytoplasm"/>
    <property type="evidence" value="ECO:0007669"/>
    <property type="project" value="UniProtKB-ARBA"/>
</dbReference>
<dbReference type="GO" id="GO:1990904">
    <property type="term" value="C:ribonucleoprotein complex"/>
    <property type="evidence" value="ECO:0007669"/>
    <property type="project" value="UniProtKB-KW"/>
</dbReference>
<dbReference type="GO" id="GO:0005840">
    <property type="term" value="C:ribosome"/>
    <property type="evidence" value="ECO:0007669"/>
    <property type="project" value="UniProtKB-KW"/>
</dbReference>
<dbReference type="GO" id="GO:0003729">
    <property type="term" value="F:mRNA binding"/>
    <property type="evidence" value="ECO:0007669"/>
    <property type="project" value="TreeGrafter"/>
</dbReference>
<dbReference type="GO" id="GO:0003735">
    <property type="term" value="F:structural constituent of ribosome"/>
    <property type="evidence" value="ECO:0007669"/>
    <property type="project" value="InterPro"/>
</dbReference>
<dbReference type="GO" id="GO:0006412">
    <property type="term" value="P:translation"/>
    <property type="evidence" value="ECO:0007669"/>
    <property type="project" value="UniProtKB-UniRule"/>
</dbReference>
<dbReference type="CDD" id="cd00387">
    <property type="entry name" value="Ribosomal_L7_L12"/>
    <property type="match status" value="1"/>
</dbReference>
<dbReference type="FunFam" id="3.30.1390.10:FF:000001">
    <property type="entry name" value="50S ribosomal protein L7/L12"/>
    <property type="match status" value="1"/>
</dbReference>
<dbReference type="Gene3D" id="3.30.1390.10">
    <property type="match status" value="1"/>
</dbReference>
<dbReference type="Gene3D" id="1.20.5.710">
    <property type="entry name" value="Single helix bin"/>
    <property type="match status" value="1"/>
</dbReference>
<dbReference type="HAMAP" id="MF_00368">
    <property type="entry name" value="Ribosomal_bL12"/>
    <property type="match status" value="1"/>
</dbReference>
<dbReference type="InterPro" id="IPR000206">
    <property type="entry name" value="Ribosomal_bL12"/>
</dbReference>
<dbReference type="InterPro" id="IPR013823">
    <property type="entry name" value="Ribosomal_bL12_C"/>
</dbReference>
<dbReference type="InterPro" id="IPR014719">
    <property type="entry name" value="Ribosomal_bL12_C/ClpS-like"/>
</dbReference>
<dbReference type="InterPro" id="IPR008932">
    <property type="entry name" value="Ribosomal_bL12_oligo"/>
</dbReference>
<dbReference type="InterPro" id="IPR036235">
    <property type="entry name" value="Ribosomal_bL12_oligo_N_sf"/>
</dbReference>
<dbReference type="NCBIfam" id="TIGR00855">
    <property type="entry name" value="L12"/>
    <property type="match status" value="1"/>
</dbReference>
<dbReference type="PANTHER" id="PTHR45987">
    <property type="entry name" value="39S RIBOSOMAL PROTEIN L12"/>
    <property type="match status" value="1"/>
</dbReference>
<dbReference type="PANTHER" id="PTHR45987:SF4">
    <property type="entry name" value="LARGE RIBOSOMAL SUBUNIT PROTEIN BL12M"/>
    <property type="match status" value="1"/>
</dbReference>
<dbReference type="Pfam" id="PF00542">
    <property type="entry name" value="Ribosomal_L12"/>
    <property type="match status" value="1"/>
</dbReference>
<dbReference type="Pfam" id="PF16320">
    <property type="entry name" value="Ribosomal_L12_N"/>
    <property type="match status" value="1"/>
</dbReference>
<dbReference type="SUPFAM" id="SSF54736">
    <property type="entry name" value="ClpS-like"/>
    <property type="match status" value="1"/>
</dbReference>
<dbReference type="SUPFAM" id="SSF48300">
    <property type="entry name" value="Ribosomal protein L7/12, oligomerisation (N-terminal) domain"/>
    <property type="match status" value="1"/>
</dbReference>
<proteinExistence type="inferred from homology"/>
<gene>
    <name evidence="1" type="primary">rplL</name>
    <name type="ordered locus">sce0409</name>
</gene>
<reference key="1">
    <citation type="journal article" date="2007" name="Nat. Biotechnol.">
        <title>Complete genome sequence of the myxobacterium Sorangium cellulosum.</title>
        <authorList>
            <person name="Schneiker S."/>
            <person name="Perlova O."/>
            <person name="Kaiser O."/>
            <person name="Gerth K."/>
            <person name="Alici A."/>
            <person name="Altmeyer M.O."/>
            <person name="Bartels D."/>
            <person name="Bekel T."/>
            <person name="Beyer S."/>
            <person name="Bode E."/>
            <person name="Bode H.B."/>
            <person name="Bolten C.J."/>
            <person name="Choudhuri J.V."/>
            <person name="Doss S."/>
            <person name="Elnakady Y.A."/>
            <person name="Frank B."/>
            <person name="Gaigalat L."/>
            <person name="Goesmann A."/>
            <person name="Groeger C."/>
            <person name="Gross F."/>
            <person name="Jelsbak L."/>
            <person name="Jelsbak L."/>
            <person name="Kalinowski J."/>
            <person name="Kegler C."/>
            <person name="Knauber T."/>
            <person name="Konietzny S."/>
            <person name="Kopp M."/>
            <person name="Krause L."/>
            <person name="Krug D."/>
            <person name="Linke B."/>
            <person name="Mahmud T."/>
            <person name="Martinez-Arias R."/>
            <person name="McHardy A.C."/>
            <person name="Merai M."/>
            <person name="Meyer F."/>
            <person name="Mormann S."/>
            <person name="Munoz-Dorado J."/>
            <person name="Perez J."/>
            <person name="Pradella S."/>
            <person name="Rachid S."/>
            <person name="Raddatz G."/>
            <person name="Rosenau F."/>
            <person name="Rueckert C."/>
            <person name="Sasse F."/>
            <person name="Scharfe M."/>
            <person name="Schuster S.C."/>
            <person name="Suen G."/>
            <person name="Treuner-Lange A."/>
            <person name="Velicer G.J."/>
            <person name="Vorholter F.-J."/>
            <person name="Weissman K.J."/>
            <person name="Welch R.D."/>
            <person name="Wenzel S.C."/>
            <person name="Whitworth D.E."/>
            <person name="Wilhelm S."/>
            <person name="Wittmann C."/>
            <person name="Bloecker H."/>
            <person name="Puehler A."/>
            <person name="Mueller R."/>
        </authorList>
    </citation>
    <scope>NUCLEOTIDE SEQUENCE [LARGE SCALE GENOMIC DNA]</scope>
    <source>
        <strain>So ce56</strain>
    </source>
</reference>
<keyword id="KW-1185">Reference proteome</keyword>
<keyword id="KW-0687">Ribonucleoprotein</keyword>
<keyword id="KW-0689">Ribosomal protein</keyword>
<comment type="function">
    <text evidence="1">Forms part of the ribosomal stalk which helps the ribosome interact with GTP-bound translation factors. Is thus essential for accurate translation.</text>
</comment>
<comment type="subunit">
    <text evidence="1">Homodimer. Part of the ribosomal stalk of the 50S ribosomal subunit. Forms a multimeric L10(L12)X complex, where L10 forms an elongated spine to which 2 to 4 L12 dimers bind in a sequential fashion. Binds GTP-bound translation factors.</text>
</comment>
<comment type="similarity">
    <text evidence="1">Belongs to the bacterial ribosomal protein bL12 family.</text>
</comment>
<accession>A9GRA8</accession>
<evidence type="ECO:0000255" key="1">
    <source>
        <dbReference type="HAMAP-Rule" id="MF_00368"/>
    </source>
</evidence>
<evidence type="ECO:0000305" key="2"/>
<organism>
    <name type="scientific">Sorangium cellulosum (strain So ce56)</name>
    <name type="common">Polyangium cellulosum (strain So ce56)</name>
    <dbReference type="NCBI Taxonomy" id="448385"/>
    <lineage>
        <taxon>Bacteria</taxon>
        <taxon>Pseudomonadati</taxon>
        <taxon>Myxococcota</taxon>
        <taxon>Polyangia</taxon>
        <taxon>Polyangiales</taxon>
        <taxon>Polyangiaceae</taxon>
        <taxon>Sorangium</taxon>
    </lineage>
</organism>
<feature type="chain" id="PRO_1000205568" description="Large ribosomal subunit protein bL12">
    <location>
        <begin position="1"/>
        <end position="128"/>
    </location>
</feature>
<name>RL7_SORC5</name>